<feature type="chain" id="PRO_1000025125" description="Urocanate hydratase">
    <location>
        <begin position="1"/>
        <end position="557"/>
    </location>
</feature>
<feature type="region of interest" description="Disordered" evidence="2">
    <location>
        <begin position="1"/>
        <end position="20"/>
    </location>
</feature>
<feature type="active site" evidence="1">
    <location>
        <position position="410"/>
    </location>
</feature>
<feature type="binding site" evidence="1">
    <location>
        <begin position="52"/>
        <end position="53"/>
    </location>
    <ligand>
        <name>NAD(+)</name>
        <dbReference type="ChEBI" id="CHEBI:57540"/>
    </ligand>
</feature>
<feature type="binding site" evidence="1">
    <location>
        <position position="130"/>
    </location>
    <ligand>
        <name>NAD(+)</name>
        <dbReference type="ChEBI" id="CHEBI:57540"/>
    </ligand>
</feature>
<feature type="binding site" evidence="1">
    <location>
        <begin position="176"/>
        <end position="178"/>
    </location>
    <ligand>
        <name>NAD(+)</name>
        <dbReference type="ChEBI" id="CHEBI:57540"/>
    </ligand>
</feature>
<feature type="binding site" evidence="1">
    <location>
        <position position="196"/>
    </location>
    <ligand>
        <name>NAD(+)</name>
        <dbReference type="ChEBI" id="CHEBI:57540"/>
    </ligand>
</feature>
<feature type="binding site" evidence="1">
    <location>
        <position position="201"/>
    </location>
    <ligand>
        <name>NAD(+)</name>
        <dbReference type="ChEBI" id="CHEBI:57540"/>
    </ligand>
</feature>
<feature type="binding site" evidence="1">
    <location>
        <begin position="242"/>
        <end position="243"/>
    </location>
    <ligand>
        <name>NAD(+)</name>
        <dbReference type="ChEBI" id="CHEBI:57540"/>
    </ligand>
</feature>
<feature type="binding site" evidence="1">
    <location>
        <begin position="263"/>
        <end position="267"/>
    </location>
    <ligand>
        <name>NAD(+)</name>
        <dbReference type="ChEBI" id="CHEBI:57540"/>
    </ligand>
</feature>
<feature type="binding site" evidence="1">
    <location>
        <begin position="273"/>
        <end position="274"/>
    </location>
    <ligand>
        <name>NAD(+)</name>
        <dbReference type="ChEBI" id="CHEBI:57540"/>
    </ligand>
</feature>
<feature type="binding site" evidence="1">
    <location>
        <position position="322"/>
    </location>
    <ligand>
        <name>NAD(+)</name>
        <dbReference type="ChEBI" id="CHEBI:57540"/>
    </ligand>
</feature>
<feature type="binding site" evidence="1">
    <location>
        <position position="492"/>
    </location>
    <ligand>
        <name>NAD(+)</name>
        <dbReference type="ChEBI" id="CHEBI:57540"/>
    </ligand>
</feature>
<name>HUTU_BRUAB</name>
<gene>
    <name evidence="1" type="primary">hutU</name>
    <name type="ordered locus">BruAb2_0301</name>
</gene>
<proteinExistence type="inferred from homology"/>
<organism>
    <name type="scientific">Brucella abortus biovar 1 (strain 9-941)</name>
    <dbReference type="NCBI Taxonomy" id="262698"/>
    <lineage>
        <taxon>Bacteria</taxon>
        <taxon>Pseudomonadati</taxon>
        <taxon>Pseudomonadota</taxon>
        <taxon>Alphaproteobacteria</taxon>
        <taxon>Hyphomicrobiales</taxon>
        <taxon>Brucellaceae</taxon>
        <taxon>Brucella/Ochrobactrum group</taxon>
        <taxon>Brucella</taxon>
    </lineage>
</organism>
<comment type="function">
    <text evidence="1">Catalyzes the conversion of urocanate to 4-imidazolone-5-propionate.</text>
</comment>
<comment type="catalytic activity">
    <reaction evidence="1">
        <text>4-imidazolone-5-propanoate = trans-urocanate + H2O</text>
        <dbReference type="Rhea" id="RHEA:13101"/>
        <dbReference type="ChEBI" id="CHEBI:15377"/>
        <dbReference type="ChEBI" id="CHEBI:17771"/>
        <dbReference type="ChEBI" id="CHEBI:77893"/>
        <dbReference type="EC" id="4.2.1.49"/>
    </reaction>
</comment>
<comment type="cofactor">
    <cofactor evidence="1">
        <name>NAD(+)</name>
        <dbReference type="ChEBI" id="CHEBI:57540"/>
    </cofactor>
    <text evidence="1">Binds 1 NAD(+) per subunit.</text>
</comment>
<comment type="pathway">
    <text evidence="1">Amino-acid degradation; L-histidine degradation into L-glutamate; N-formimidoyl-L-glutamate from L-histidine: step 2/3.</text>
</comment>
<comment type="subcellular location">
    <subcellularLocation>
        <location evidence="1">Cytoplasm</location>
    </subcellularLocation>
</comment>
<comment type="similarity">
    <text evidence="1">Belongs to the urocanase family.</text>
</comment>
<dbReference type="EC" id="4.2.1.49" evidence="1"/>
<dbReference type="EMBL" id="AE017224">
    <property type="protein sequence ID" value="AAX75734.1"/>
    <property type="molecule type" value="Genomic_DNA"/>
</dbReference>
<dbReference type="RefSeq" id="WP_002965715.1">
    <property type="nucleotide sequence ID" value="NC_006933.1"/>
</dbReference>
<dbReference type="SMR" id="Q579F0"/>
<dbReference type="EnsemblBacteria" id="AAX75734">
    <property type="protein sequence ID" value="AAX75734"/>
    <property type="gene ID" value="BruAb2_0301"/>
</dbReference>
<dbReference type="GeneID" id="93015753"/>
<dbReference type="KEGG" id="bmb:BruAb2_0301"/>
<dbReference type="HOGENOM" id="CLU_018868_0_1_5"/>
<dbReference type="UniPathway" id="UPA00379">
    <property type="reaction ID" value="UER00550"/>
</dbReference>
<dbReference type="Proteomes" id="UP000000540">
    <property type="component" value="Chromosome II"/>
</dbReference>
<dbReference type="GO" id="GO:0005737">
    <property type="term" value="C:cytoplasm"/>
    <property type="evidence" value="ECO:0007669"/>
    <property type="project" value="UniProtKB-SubCell"/>
</dbReference>
<dbReference type="GO" id="GO:0016153">
    <property type="term" value="F:urocanate hydratase activity"/>
    <property type="evidence" value="ECO:0007669"/>
    <property type="project" value="UniProtKB-UniRule"/>
</dbReference>
<dbReference type="GO" id="GO:0019556">
    <property type="term" value="P:L-histidine catabolic process to glutamate and formamide"/>
    <property type="evidence" value="ECO:0007669"/>
    <property type="project" value="UniProtKB-UniPathway"/>
</dbReference>
<dbReference type="GO" id="GO:0019557">
    <property type="term" value="P:L-histidine catabolic process to glutamate and formate"/>
    <property type="evidence" value="ECO:0007669"/>
    <property type="project" value="UniProtKB-UniPathway"/>
</dbReference>
<dbReference type="FunFam" id="3.40.50.10730:FF:000001">
    <property type="entry name" value="Urocanate hydratase"/>
    <property type="match status" value="1"/>
</dbReference>
<dbReference type="Gene3D" id="3.40.50.10730">
    <property type="entry name" value="Urocanase like domains"/>
    <property type="match status" value="1"/>
</dbReference>
<dbReference type="Gene3D" id="3.40.1770.10">
    <property type="entry name" value="Urocanase superfamily"/>
    <property type="match status" value="1"/>
</dbReference>
<dbReference type="HAMAP" id="MF_00577">
    <property type="entry name" value="HutU"/>
    <property type="match status" value="1"/>
</dbReference>
<dbReference type="InterPro" id="IPR055351">
    <property type="entry name" value="Urocanase"/>
</dbReference>
<dbReference type="InterPro" id="IPR023637">
    <property type="entry name" value="Urocanase-like"/>
</dbReference>
<dbReference type="InterPro" id="IPR035401">
    <property type="entry name" value="Urocanase_C"/>
</dbReference>
<dbReference type="InterPro" id="IPR038364">
    <property type="entry name" value="Urocanase_central_sf"/>
</dbReference>
<dbReference type="InterPro" id="IPR023636">
    <property type="entry name" value="Urocanase_CS"/>
</dbReference>
<dbReference type="InterPro" id="IPR035400">
    <property type="entry name" value="Urocanase_N"/>
</dbReference>
<dbReference type="InterPro" id="IPR035085">
    <property type="entry name" value="Urocanase_Rossmann-like"/>
</dbReference>
<dbReference type="InterPro" id="IPR036190">
    <property type="entry name" value="Urocanase_sf"/>
</dbReference>
<dbReference type="NCBIfam" id="TIGR01228">
    <property type="entry name" value="hutU"/>
    <property type="match status" value="1"/>
</dbReference>
<dbReference type="NCBIfam" id="NF003820">
    <property type="entry name" value="PRK05414.1"/>
    <property type="match status" value="1"/>
</dbReference>
<dbReference type="PANTHER" id="PTHR12216">
    <property type="entry name" value="UROCANATE HYDRATASE"/>
    <property type="match status" value="1"/>
</dbReference>
<dbReference type="PANTHER" id="PTHR12216:SF4">
    <property type="entry name" value="UROCANATE HYDRATASE"/>
    <property type="match status" value="1"/>
</dbReference>
<dbReference type="Pfam" id="PF01175">
    <property type="entry name" value="Urocanase"/>
    <property type="match status" value="1"/>
</dbReference>
<dbReference type="Pfam" id="PF17392">
    <property type="entry name" value="Urocanase_C"/>
    <property type="match status" value="1"/>
</dbReference>
<dbReference type="Pfam" id="PF17391">
    <property type="entry name" value="Urocanase_N"/>
    <property type="match status" value="1"/>
</dbReference>
<dbReference type="PIRSF" id="PIRSF001423">
    <property type="entry name" value="Urocanate_hydrat"/>
    <property type="match status" value="1"/>
</dbReference>
<dbReference type="SUPFAM" id="SSF111326">
    <property type="entry name" value="Urocanase"/>
    <property type="match status" value="1"/>
</dbReference>
<dbReference type="PROSITE" id="PS01233">
    <property type="entry name" value="UROCANASE"/>
    <property type="match status" value="1"/>
</dbReference>
<evidence type="ECO:0000255" key="1">
    <source>
        <dbReference type="HAMAP-Rule" id="MF_00577"/>
    </source>
</evidence>
<evidence type="ECO:0000256" key="2">
    <source>
        <dbReference type="SAM" id="MobiDB-lite"/>
    </source>
</evidence>
<reference key="1">
    <citation type="journal article" date="2005" name="J. Bacteriol.">
        <title>Completion of the genome sequence of Brucella abortus and comparison to the highly similar genomes of Brucella melitensis and Brucella suis.</title>
        <authorList>
            <person name="Halling S.M."/>
            <person name="Peterson-Burch B.D."/>
            <person name="Bricker B.J."/>
            <person name="Zuerner R.L."/>
            <person name="Qing Z."/>
            <person name="Li L.-L."/>
            <person name="Kapur V."/>
            <person name="Alt D.P."/>
            <person name="Olsen S.C."/>
        </authorList>
    </citation>
    <scope>NUCLEOTIDE SEQUENCE [LARGE SCALE GENOMIC DNA]</scope>
    <source>
        <strain>9-941</strain>
    </source>
</reference>
<sequence length="557" mass="61229">MSNPRHNEREVRSPRGDELNAKSWLTEAPLRMLMNNLDPDVAERPHELVVYGGIGRAARTWDDFDRIVATLKTLNDNETLLVQSGKPVGVFRTHKDAPRVLIANSNLVPHWANWDHFNELDKKGLAMYGQMTAGSWIYIGAQGIVQGTYETFVEAGRQHYGGNLKGRWILTGGLGGMGGAQPLAAVMAGACCLAVECDETRADFRLRTRYVDEKTHSLDEALAKIDAWTKAGEAKSIALIGNAAEIFPELVKRGVKPDIVTDQTSAHDPVHGYLPLGWTVAEWRAKQENDPKAVEKAARASMKVQVQAMLDFWNAGIPTVDYGNNIRQMALEEGLENAFAFPGFVPAYIRPLFCRGIGPYRWAALSGDPEDIAKTDAKVKELLPDNKHLHNWLDMAKERIAFQGLPARICWVGLGDRHRLGLAFNEMVRNGELKAPIVIGRDHLDSGSVASPNRETEAMKDGSDAVSDWPLLNALLNTASGATWVSLHHGGGVGMGFSQHAGMVICCDGTEDADRRLERVLWNDPATGVMRHADAGYDIALDWARKQGLRLPAILGN</sequence>
<keyword id="KW-0963">Cytoplasm</keyword>
<keyword id="KW-0369">Histidine metabolism</keyword>
<keyword id="KW-0456">Lyase</keyword>
<keyword id="KW-0520">NAD</keyword>
<protein>
    <recommendedName>
        <fullName evidence="1">Urocanate hydratase</fullName>
        <shortName evidence="1">Urocanase</shortName>
        <ecNumber evidence="1">4.2.1.49</ecNumber>
    </recommendedName>
    <alternativeName>
        <fullName evidence="1">Imidazolonepropionate hydrolase</fullName>
    </alternativeName>
</protein>
<accession>Q579F0</accession>